<comment type="function">
    <text evidence="1">Binds to 23S rRNA. Forms part of two intersubunit bridges in the 70S ribosome.</text>
</comment>
<comment type="subunit">
    <text evidence="1">Part of the 50S ribosomal subunit. Forms a cluster with proteins L3 and L19. In the 70S ribosome, L14 and L19 interact and together make contacts with the 16S rRNA in bridges B5 and B8.</text>
</comment>
<comment type="similarity">
    <text evidence="1">Belongs to the universal ribosomal protein uL14 family.</text>
</comment>
<proteinExistence type="inferred from homology"/>
<protein>
    <recommendedName>
        <fullName evidence="1">Large ribosomal subunit protein uL14</fullName>
    </recommendedName>
    <alternativeName>
        <fullName evidence="2">50S ribosomal protein L14</fullName>
    </alternativeName>
</protein>
<evidence type="ECO:0000255" key="1">
    <source>
        <dbReference type="HAMAP-Rule" id="MF_01367"/>
    </source>
</evidence>
<evidence type="ECO:0000305" key="2"/>
<name>RL14_MYCS5</name>
<reference key="1">
    <citation type="journal article" date="2005" name="J. Bacteriol.">
        <title>Swine and poultry pathogens: the complete genome sequences of two strains of Mycoplasma hyopneumoniae and a strain of Mycoplasma synoviae.</title>
        <authorList>
            <person name="Vasconcelos A.T.R."/>
            <person name="Ferreira H.B."/>
            <person name="Bizarro C.V."/>
            <person name="Bonatto S.L."/>
            <person name="Carvalho M.O."/>
            <person name="Pinto P.M."/>
            <person name="Almeida D.F."/>
            <person name="Almeida L.G.P."/>
            <person name="Almeida R."/>
            <person name="Alves-Junior L."/>
            <person name="Assuncao E.N."/>
            <person name="Azevedo V.A.C."/>
            <person name="Bogo M.R."/>
            <person name="Brigido M.M."/>
            <person name="Brocchi M."/>
            <person name="Burity H.A."/>
            <person name="Camargo A.A."/>
            <person name="Camargo S.S."/>
            <person name="Carepo M.S."/>
            <person name="Carraro D.M."/>
            <person name="de Mattos Cascardo J.C."/>
            <person name="Castro L.A."/>
            <person name="Cavalcanti G."/>
            <person name="Chemale G."/>
            <person name="Collevatti R.G."/>
            <person name="Cunha C.W."/>
            <person name="Dallagiovanna B."/>
            <person name="Dambros B.P."/>
            <person name="Dellagostin O.A."/>
            <person name="Falcao C."/>
            <person name="Fantinatti-Garboggini F."/>
            <person name="Felipe M.S.S."/>
            <person name="Fiorentin L."/>
            <person name="Franco G.R."/>
            <person name="Freitas N.S.A."/>
            <person name="Frias D."/>
            <person name="Grangeiro T.B."/>
            <person name="Grisard E.C."/>
            <person name="Guimaraes C.T."/>
            <person name="Hungria M."/>
            <person name="Jardim S.N."/>
            <person name="Krieger M.A."/>
            <person name="Laurino J.P."/>
            <person name="Lima L.F.A."/>
            <person name="Lopes M.I."/>
            <person name="Loreto E.L.S."/>
            <person name="Madeira H.M.F."/>
            <person name="Manfio G.P."/>
            <person name="Maranhao A.Q."/>
            <person name="Martinkovics C.T."/>
            <person name="Medeiros S.R.B."/>
            <person name="Moreira M.A.M."/>
            <person name="Neiva M."/>
            <person name="Ramalho-Neto C.E."/>
            <person name="Nicolas M.F."/>
            <person name="Oliveira S.C."/>
            <person name="Paixao R.F.C."/>
            <person name="Pedrosa F.O."/>
            <person name="Pena S.D.J."/>
            <person name="Pereira M."/>
            <person name="Pereira-Ferrari L."/>
            <person name="Piffer I."/>
            <person name="Pinto L.S."/>
            <person name="Potrich D.P."/>
            <person name="Salim A.C.M."/>
            <person name="Santos F.R."/>
            <person name="Schmitt R."/>
            <person name="Schneider M.P.C."/>
            <person name="Schrank A."/>
            <person name="Schrank I.S."/>
            <person name="Schuck A.F."/>
            <person name="Seuanez H.N."/>
            <person name="Silva D.W."/>
            <person name="Silva R."/>
            <person name="Silva S.C."/>
            <person name="Soares C.M.A."/>
            <person name="Souza K.R.L."/>
            <person name="Souza R.C."/>
            <person name="Staats C.C."/>
            <person name="Steffens M.B.R."/>
            <person name="Teixeira S.M.R."/>
            <person name="Urmenyi T.P."/>
            <person name="Vainstein M.H."/>
            <person name="Zuccherato L.W."/>
            <person name="Simpson A.J.G."/>
            <person name="Zaha A."/>
        </authorList>
    </citation>
    <scope>NUCLEOTIDE SEQUENCE [LARGE SCALE GENOMIC DNA]</scope>
    <source>
        <strain>53</strain>
    </source>
</reference>
<dbReference type="EMBL" id="AE017245">
    <property type="protein sequence ID" value="AAZ44040.1"/>
    <property type="molecule type" value="Genomic_DNA"/>
</dbReference>
<dbReference type="RefSeq" id="WP_011283769.1">
    <property type="nucleotide sequence ID" value="NC_007294.1"/>
</dbReference>
<dbReference type="SMR" id="Q4A5D1"/>
<dbReference type="STRING" id="262723.MS53_0633"/>
<dbReference type="GeneID" id="93530423"/>
<dbReference type="KEGG" id="msy:MS53_0633"/>
<dbReference type="eggNOG" id="COG0093">
    <property type="taxonomic scope" value="Bacteria"/>
</dbReference>
<dbReference type="HOGENOM" id="CLU_095071_2_1_14"/>
<dbReference type="OrthoDB" id="9806379at2"/>
<dbReference type="Proteomes" id="UP000000549">
    <property type="component" value="Chromosome"/>
</dbReference>
<dbReference type="GO" id="GO:0022625">
    <property type="term" value="C:cytosolic large ribosomal subunit"/>
    <property type="evidence" value="ECO:0007669"/>
    <property type="project" value="TreeGrafter"/>
</dbReference>
<dbReference type="GO" id="GO:0070180">
    <property type="term" value="F:large ribosomal subunit rRNA binding"/>
    <property type="evidence" value="ECO:0007669"/>
    <property type="project" value="TreeGrafter"/>
</dbReference>
<dbReference type="GO" id="GO:0003735">
    <property type="term" value="F:structural constituent of ribosome"/>
    <property type="evidence" value="ECO:0007669"/>
    <property type="project" value="InterPro"/>
</dbReference>
<dbReference type="GO" id="GO:0006412">
    <property type="term" value="P:translation"/>
    <property type="evidence" value="ECO:0007669"/>
    <property type="project" value="UniProtKB-UniRule"/>
</dbReference>
<dbReference type="CDD" id="cd00337">
    <property type="entry name" value="Ribosomal_uL14"/>
    <property type="match status" value="1"/>
</dbReference>
<dbReference type="Gene3D" id="2.40.150.20">
    <property type="entry name" value="Ribosomal protein L14"/>
    <property type="match status" value="1"/>
</dbReference>
<dbReference type="HAMAP" id="MF_01367">
    <property type="entry name" value="Ribosomal_uL14"/>
    <property type="match status" value="1"/>
</dbReference>
<dbReference type="InterPro" id="IPR000218">
    <property type="entry name" value="Ribosomal_uL14"/>
</dbReference>
<dbReference type="InterPro" id="IPR005745">
    <property type="entry name" value="Ribosomal_uL14_bac-type"/>
</dbReference>
<dbReference type="InterPro" id="IPR019972">
    <property type="entry name" value="Ribosomal_uL14_CS"/>
</dbReference>
<dbReference type="InterPro" id="IPR036853">
    <property type="entry name" value="Ribosomal_uL14_sf"/>
</dbReference>
<dbReference type="NCBIfam" id="TIGR01067">
    <property type="entry name" value="rplN_bact"/>
    <property type="match status" value="1"/>
</dbReference>
<dbReference type="PANTHER" id="PTHR11761">
    <property type="entry name" value="50S/60S RIBOSOMAL PROTEIN L14/L23"/>
    <property type="match status" value="1"/>
</dbReference>
<dbReference type="PANTHER" id="PTHR11761:SF3">
    <property type="entry name" value="LARGE RIBOSOMAL SUBUNIT PROTEIN UL14M"/>
    <property type="match status" value="1"/>
</dbReference>
<dbReference type="Pfam" id="PF00238">
    <property type="entry name" value="Ribosomal_L14"/>
    <property type="match status" value="1"/>
</dbReference>
<dbReference type="SMART" id="SM01374">
    <property type="entry name" value="Ribosomal_L14"/>
    <property type="match status" value="1"/>
</dbReference>
<dbReference type="SUPFAM" id="SSF50193">
    <property type="entry name" value="Ribosomal protein L14"/>
    <property type="match status" value="1"/>
</dbReference>
<dbReference type="PROSITE" id="PS00049">
    <property type="entry name" value="RIBOSOMAL_L14"/>
    <property type="match status" value="1"/>
</dbReference>
<keyword id="KW-1185">Reference proteome</keyword>
<keyword id="KW-0687">Ribonucleoprotein</keyword>
<keyword id="KW-0689">Ribosomal protein</keyword>
<keyword id="KW-0694">RNA-binding</keyword>
<keyword id="KW-0699">rRNA-binding</keyword>
<organism>
    <name type="scientific">Mycoplasmopsis synoviae (strain 53)</name>
    <name type="common">Mycoplasma synoviae</name>
    <dbReference type="NCBI Taxonomy" id="262723"/>
    <lineage>
        <taxon>Bacteria</taxon>
        <taxon>Bacillati</taxon>
        <taxon>Mycoplasmatota</taxon>
        <taxon>Mycoplasmoidales</taxon>
        <taxon>Metamycoplasmataceae</taxon>
        <taxon>Mycoplasmopsis</taxon>
    </lineage>
</organism>
<accession>Q4A5D1</accession>
<sequence>MIFELSRANVADNSGAKQVGVIRVLGGSKKKVAEIGDVVICSVKKALPSGDVKAGQVLKAVVVRTKRNTYRSNGSYIRFDDNAVVILKDDGTPVGTRVFGPVAREIREKYPKIVSLALEVL</sequence>
<feature type="chain" id="PRO_0000355825" description="Large ribosomal subunit protein uL14">
    <location>
        <begin position="1"/>
        <end position="121"/>
    </location>
</feature>
<gene>
    <name evidence="1" type="primary">rplN</name>
    <name type="ordered locus">MS53_0633</name>
</gene>